<organism>
    <name type="scientific">Roseobacter denitrificans (strain ATCC 33942 / OCh 114)</name>
    <name type="common">Erythrobacter sp. (strain OCh 114)</name>
    <name type="synonym">Roseobacter denitrificans</name>
    <dbReference type="NCBI Taxonomy" id="375451"/>
    <lineage>
        <taxon>Bacteria</taxon>
        <taxon>Pseudomonadati</taxon>
        <taxon>Pseudomonadota</taxon>
        <taxon>Alphaproteobacteria</taxon>
        <taxon>Rhodobacterales</taxon>
        <taxon>Roseobacteraceae</taxon>
        <taxon>Roseobacter</taxon>
    </lineage>
</organism>
<feature type="chain" id="PRO_1000196890" description="Thiazole synthase">
    <location>
        <begin position="1"/>
        <end position="256"/>
    </location>
</feature>
<feature type="active site" description="Schiff-base intermediate with DXP" evidence="1">
    <location>
        <position position="96"/>
    </location>
</feature>
<feature type="binding site" evidence="1">
    <location>
        <position position="157"/>
    </location>
    <ligand>
        <name>1-deoxy-D-xylulose 5-phosphate</name>
        <dbReference type="ChEBI" id="CHEBI:57792"/>
    </ligand>
</feature>
<feature type="binding site" evidence="1">
    <location>
        <begin position="184"/>
        <end position="185"/>
    </location>
    <ligand>
        <name>1-deoxy-D-xylulose 5-phosphate</name>
        <dbReference type="ChEBI" id="CHEBI:57792"/>
    </ligand>
</feature>
<feature type="binding site" evidence="1">
    <location>
        <begin position="206"/>
        <end position="207"/>
    </location>
    <ligand>
        <name>1-deoxy-D-xylulose 5-phosphate</name>
        <dbReference type="ChEBI" id="CHEBI:57792"/>
    </ligand>
</feature>
<dbReference type="EC" id="2.8.1.10" evidence="1"/>
<dbReference type="EMBL" id="CP000362">
    <property type="protein sequence ID" value="ABG30433.1"/>
    <property type="molecule type" value="Genomic_DNA"/>
</dbReference>
<dbReference type="RefSeq" id="WP_011567055.1">
    <property type="nucleotide sequence ID" value="NC_008209.1"/>
</dbReference>
<dbReference type="SMR" id="Q16C60"/>
<dbReference type="STRING" id="375451.RD1_0749"/>
<dbReference type="KEGG" id="rde:RD1_0749"/>
<dbReference type="eggNOG" id="COG2022">
    <property type="taxonomic scope" value="Bacteria"/>
</dbReference>
<dbReference type="HOGENOM" id="CLU_062233_1_0_5"/>
<dbReference type="OrthoDB" id="9805935at2"/>
<dbReference type="UniPathway" id="UPA00060"/>
<dbReference type="Proteomes" id="UP000007029">
    <property type="component" value="Chromosome"/>
</dbReference>
<dbReference type="GO" id="GO:0005737">
    <property type="term" value="C:cytoplasm"/>
    <property type="evidence" value="ECO:0007669"/>
    <property type="project" value="UniProtKB-SubCell"/>
</dbReference>
<dbReference type="GO" id="GO:1990107">
    <property type="term" value="F:thiazole synthase activity"/>
    <property type="evidence" value="ECO:0007669"/>
    <property type="project" value="UniProtKB-EC"/>
</dbReference>
<dbReference type="GO" id="GO:0009229">
    <property type="term" value="P:thiamine diphosphate biosynthetic process"/>
    <property type="evidence" value="ECO:0007669"/>
    <property type="project" value="UniProtKB-UniRule"/>
</dbReference>
<dbReference type="CDD" id="cd04728">
    <property type="entry name" value="ThiG"/>
    <property type="match status" value="1"/>
</dbReference>
<dbReference type="Gene3D" id="3.20.20.70">
    <property type="entry name" value="Aldolase class I"/>
    <property type="match status" value="1"/>
</dbReference>
<dbReference type="HAMAP" id="MF_00443">
    <property type="entry name" value="ThiG"/>
    <property type="match status" value="1"/>
</dbReference>
<dbReference type="InterPro" id="IPR013785">
    <property type="entry name" value="Aldolase_TIM"/>
</dbReference>
<dbReference type="InterPro" id="IPR033983">
    <property type="entry name" value="Thiazole_synthase_ThiG"/>
</dbReference>
<dbReference type="InterPro" id="IPR008867">
    <property type="entry name" value="ThiG"/>
</dbReference>
<dbReference type="PANTHER" id="PTHR34266">
    <property type="entry name" value="THIAZOLE SYNTHASE"/>
    <property type="match status" value="1"/>
</dbReference>
<dbReference type="PANTHER" id="PTHR34266:SF2">
    <property type="entry name" value="THIAZOLE SYNTHASE"/>
    <property type="match status" value="1"/>
</dbReference>
<dbReference type="Pfam" id="PF05690">
    <property type="entry name" value="ThiG"/>
    <property type="match status" value="1"/>
</dbReference>
<dbReference type="SUPFAM" id="SSF110399">
    <property type="entry name" value="ThiG-like"/>
    <property type="match status" value="1"/>
</dbReference>
<name>THIG_ROSDO</name>
<protein>
    <recommendedName>
        <fullName evidence="1">Thiazole synthase</fullName>
        <ecNumber evidence="1">2.8.1.10</ecNumber>
    </recommendedName>
</protein>
<proteinExistence type="inferred from homology"/>
<accession>Q16C60</accession>
<gene>
    <name evidence="1" type="primary">thiG</name>
    <name type="ordered locus">RD1_0749</name>
</gene>
<sequence>MPIFYGTEVTSRLMLGTAQYPSPAILADAFRRSDAGIATVSVRREAGGDQAGQDFWGLIRDLGVAVLPNTAGCYSVREAVTTAQMARELFDTNWIKLEVIGHTDTLQPDPFGLVEAAAQLAEDGFEVFPYCTEDLVLCERLVEVGCKVLMPWGAPIGTGLGLNNIYGLRSLRAHFPDTPLVVDAGLGLPSHATQAMELGYDAVLLNTAVSKAGDPAAMAHAFALAVEAGALAAGADPMDARDMAAPSTPVFGKAML</sequence>
<reference key="1">
    <citation type="journal article" date="2007" name="J. Bacteriol.">
        <title>The complete genome sequence of Roseobacter denitrificans reveals a mixotrophic rather than photosynthetic metabolism.</title>
        <authorList>
            <person name="Swingley W.D."/>
            <person name="Sadekar S."/>
            <person name="Mastrian S.D."/>
            <person name="Matthies H.J."/>
            <person name="Hao J."/>
            <person name="Ramos H."/>
            <person name="Acharya C.R."/>
            <person name="Conrad A.L."/>
            <person name="Taylor H.L."/>
            <person name="Dejesa L.C."/>
            <person name="Shah M.K."/>
            <person name="O'Huallachain M.E."/>
            <person name="Lince M.T."/>
            <person name="Blankenship R.E."/>
            <person name="Beatty J.T."/>
            <person name="Touchman J.W."/>
        </authorList>
    </citation>
    <scope>NUCLEOTIDE SEQUENCE [LARGE SCALE GENOMIC DNA]</scope>
    <source>
        <strain>ATCC 33942 / OCh 114</strain>
    </source>
</reference>
<evidence type="ECO:0000255" key="1">
    <source>
        <dbReference type="HAMAP-Rule" id="MF_00443"/>
    </source>
</evidence>
<comment type="function">
    <text evidence="1">Catalyzes the rearrangement of 1-deoxy-D-xylulose 5-phosphate (DXP) to produce the thiazole phosphate moiety of thiamine. Sulfur is provided by the thiocarboxylate moiety of the carrier protein ThiS. In vitro, sulfur can be provided by H(2)S.</text>
</comment>
<comment type="catalytic activity">
    <reaction evidence="1">
        <text>[ThiS sulfur-carrier protein]-C-terminal-Gly-aminoethanethioate + 2-iminoacetate + 1-deoxy-D-xylulose 5-phosphate = [ThiS sulfur-carrier protein]-C-terminal Gly-Gly + 2-[(2R,5Z)-2-carboxy-4-methylthiazol-5(2H)-ylidene]ethyl phosphate + 2 H2O + H(+)</text>
        <dbReference type="Rhea" id="RHEA:26297"/>
        <dbReference type="Rhea" id="RHEA-COMP:12909"/>
        <dbReference type="Rhea" id="RHEA-COMP:19908"/>
        <dbReference type="ChEBI" id="CHEBI:15377"/>
        <dbReference type="ChEBI" id="CHEBI:15378"/>
        <dbReference type="ChEBI" id="CHEBI:57792"/>
        <dbReference type="ChEBI" id="CHEBI:62899"/>
        <dbReference type="ChEBI" id="CHEBI:77846"/>
        <dbReference type="ChEBI" id="CHEBI:90778"/>
        <dbReference type="ChEBI" id="CHEBI:232372"/>
        <dbReference type="EC" id="2.8.1.10"/>
    </reaction>
</comment>
<comment type="pathway">
    <text evidence="1">Cofactor biosynthesis; thiamine diphosphate biosynthesis.</text>
</comment>
<comment type="subunit">
    <text evidence="1">Homotetramer. Forms heterodimers with either ThiH or ThiS.</text>
</comment>
<comment type="subcellular location">
    <subcellularLocation>
        <location evidence="1">Cytoplasm</location>
    </subcellularLocation>
</comment>
<comment type="similarity">
    <text evidence="1">Belongs to the ThiG family.</text>
</comment>
<keyword id="KW-0963">Cytoplasm</keyword>
<keyword id="KW-1185">Reference proteome</keyword>
<keyword id="KW-0704">Schiff base</keyword>
<keyword id="KW-0784">Thiamine biosynthesis</keyword>
<keyword id="KW-0808">Transferase</keyword>